<comment type="function">
    <text evidence="1">Catalyzes the attachment of threonine to tRNA(Thr) in a two-step reaction: L-threonine is first activated by ATP to form Thr-AMP and then transferred to the acceptor end of tRNA(Thr). Also edits incorrectly charged L-seryl-tRNA(Thr).</text>
</comment>
<comment type="catalytic activity">
    <reaction evidence="1">
        <text>tRNA(Thr) + L-threonine + ATP = L-threonyl-tRNA(Thr) + AMP + diphosphate + H(+)</text>
        <dbReference type="Rhea" id="RHEA:24624"/>
        <dbReference type="Rhea" id="RHEA-COMP:9670"/>
        <dbReference type="Rhea" id="RHEA-COMP:9704"/>
        <dbReference type="ChEBI" id="CHEBI:15378"/>
        <dbReference type="ChEBI" id="CHEBI:30616"/>
        <dbReference type="ChEBI" id="CHEBI:33019"/>
        <dbReference type="ChEBI" id="CHEBI:57926"/>
        <dbReference type="ChEBI" id="CHEBI:78442"/>
        <dbReference type="ChEBI" id="CHEBI:78534"/>
        <dbReference type="ChEBI" id="CHEBI:456215"/>
        <dbReference type="EC" id="6.1.1.3"/>
    </reaction>
</comment>
<comment type="cofactor">
    <cofactor evidence="1">
        <name>Zn(2+)</name>
        <dbReference type="ChEBI" id="CHEBI:29105"/>
    </cofactor>
    <text evidence="1">Binds 1 zinc ion per subunit.</text>
</comment>
<comment type="subunit">
    <text evidence="1">Homodimer.</text>
</comment>
<comment type="subcellular location">
    <subcellularLocation>
        <location evidence="1">Cytoplasm</location>
    </subcellularLocation>
</comment>
<comment type="similarity">
    <text evidence="1">Belongs to the class-II aminoacyl-tRNA synthetase family.</text>
</comment>
<organism>
    <name type="scientific">Paraburkholderia phymatum (strain DSM 17167 / CIP 108236 / LMG 21445 / STM815)</name>
    <name type="common">Burkholderia phymatum</name>
    <dbReference type="NCBI Taxonomy" id="391038"/>
    <lineage>
        <taxon>Bacteria</taxon>
        <taxon>Pseudomonadati</taxon>
        <taxon>Pseudomonadota</taxon>
        <taxon>Betaproteobacteria</taxon>
        <taxon>Burkholderiales</taxon>
        <taxon>Burkholderiaceae</taxon>
        <taxon>Paraburkholderia</taxon>
    </lineage>
</organism>
<reference key="1">
    <citation type="journal article" date="2014" name="Stand. Genomic Sci.">
        <title>Complete genome sequence of Burkholderia phymatum STM815(T), a broad host range and efficient nitrogen-fixing symbiont of Mimosa species.</title>
        <authorList>
            <person name="Moulin L."/>
            <person name="Klonowska A."/>
            <person name="Caroline B."/>
            <person name="Booth K."/>
            <person name="Vriezen J.A."/>
            <person name="Melkonian R."/>
            <person name="James E.K."/>
            <person name="Young J.P."/>
            <person name="Bena G."/>
            <person name="Hauser L."/>
            <person name="Land M."/>
            <person name="Kyrpides N."/>
            <person name="Bruce D."/>
            <person name="Chain P."/>
            <person name="Copeland A."/>
            <person name="Pitluck S."/>
            <person name="Woyke T."/>
            <person name="Lizotte-Waniewski M."/>
            <person name="Bristow J."/>
            <person name="Riley M."/>
        </authorList>
    </citation>
    <scope>NUCLEOTIDE SEQUENCE [LARGE SCALE GENOMIC DNA]</scope>
    <source>
        <strain>DSM 17167 / CIP 108236 / LMG 21445 / STM815</strain>
    </source>
</reference>
<proteinExistence type="inferred from homology"/>
<name>SYT_PARP8</name>
<gene>
    <name evidence="1" type="primary">thrS</name>
    <name type="ordered locus">Bphy_1558</name>
</gene>
<protein>
    <recommendedName>
        <fullName evidence="1">Threonine--tRNA ligase</fullName>
        <ecNumber evidence="1">6.1.1.3</ecNumber>
    </recommendedName>
    <alternativeName>
        <fullName evidence="1">Threonyl-tRNA synthetase</fullName>
        <shortName evidence="1">ThrRS</shortName>
    </alternativeName>
</protein>
<sequence>MVSIRLPDGSVRQYEHPVTVAEVAASIGPGLAKAALGGKIDGELVDTSALIDHDVALAIVTDKDADGLDIIRHSTAHLLAYAVKDLFPEAQVTIGPVIDNGFYYDFSYSRPFTPEDLEKIEKRMQELAKKDEPVSRRVVSRDEAADYFKSIGEKYKAEIIESIPASDDIKLYSHGGFTDLCRGPHVPSTGKLKVFKLMKVAGAYWRGDSKNEQLQRIYGTAWTKKEDQDAYLHMLEEAEKRDHRKLGKQLDLFHMQDESPGMVFWHPRGWTLWQQVEQYMRRRVNEAGYLEIKTPMIMDRSLWEASGHWQNYRDNMFTTESEKRDYAIKPMNCPGHVQVFNHGLRSYRDLPLRYAEFGSCHRNESSGALHGLMRVRGFVQDDAHIFCTEDQFISESIAFNTLAMSVYKDFGFDNVEIKLSLRPDARAGTDEIWDRAEQGLRDALTACGVTWEELPGEGAFYGPKVEYHIKDALGRSWQCGTLQLDMVLPERLGAEFVAEDNSRRRPIMLHRAIVGSMERFLGILIEHHAGAMPAWLAPMQVVVMNIAESQAEYAQSLAQSLQKQGVRVEADLRNEKISYKIREHTLEKVPYLLVVGDKERDAQTVAVRARGGIDLGVMPVDAFSERLRQDVQTFN</sequence>
<feature type="chain" id="PRO_1000098552" description="Threonine--tRNA ligase">
    <location>
        <begin position="1"/>
        <end position="635"/>
    </location>
</feature>
<feature type="domain" description="TGS" evidence="2">
    <location>
        <begin position="1"/>
        <end position="61"/>
    </location>
</feature>
<feature type="region of interest" description="Catalytic" evidence="1">
    <location>
        <begin position="242"/>
        <end position="533"/>
    </location>
</feature>
<feature type="binding site" evidence="1">
    <location>
        <position position="333"/>
    </location>
    <ligand>
        <name>Zn(2+)</name>
        <dbReference type="ChEBI" id="CHEBI:29105"/>
    </ligand>
</feature>
<feature type="binding site" evidence="1">
    <location>
        <position position="384"/>
    </location>
    <ligand>
        <name>Zn(2+)</name>
        <dbReference type="ChEBI" id="CHEBI:29105"/>
    </ligand>
</feature>
<feature type="binding site" evidence="1">
    <location>
        <position position="510"/>
    </location>
    <ligand>
        <name>Zn(2+)</name>
        <dbReference type="ChEBI" id="CHEBI:29105"/>
    </ligand>
</feature>
<dbReference type="EC" id="6.1.1.3" evidence="1"/>
<dbReference type="EMBL" id="CP001043">
    <property type="protein sequence ID" value="ACC70740.1"/>
    <property type="molecule type" value="Genomic_DNA"/>
</dbReference>
<dbReference type="RefSeq" id="WP_012400950.1">
    <property type="nucleotide sequence ID" value="NC_010622.1"/>
</dbReference>
<dbReference type="SMR" id="B2JJJ7"/>
<dbReference type="STRING" id="391038.Bphy_1558"/>
<dbReference type="KEGG" id="bph:Bphy_1558"/>
<dbReference type="eggNOG" id="COG0441">
    <property type="taxonomic scope" value="Bacteria"/>
</dbReference>
<dbReference type="HOGENOM" id="CLU_008554_0_1_4"/>
<dbReference type="OrthoDB" id="9802304at2"/>
<dbReference type="Proteomes" id="UP000001192">
    <property type="component" value="Chromosome 1"/>
</dbReference>
<dbReference type="GO" id="GO:0005829">
    <property type="term" value="C:cytosol"/>
    <property type="evidence" value="ECO:0007669"/>
    <property type="project" value="TreeGrafter"/>
</dbReference>
<dbReference type="GO" id="GO:0005524">
    <property type="term" value="F:ATP binding"/>
    <property type="evidence" value="ECO:0007669"/>
    <property type="project" value="UniProtKB-UniRule"/>
</dbReference>
<dbReference type="GO" id="GO:0046872">
    <property type="term" value="F:metal ion binding"/>
    <property type="evidence" value="ECO:0007669"/>
    <property type="project" value="UniProtKB-KW"/>
</dbReference>
<dbReference type="GO" id="GO:0004829">
    <property type="term" value="F:threonine-tRNA ligase activity"/>
    <property type="evidence" value="ECO:0007669"/>
    <property type="project" value="UniProtKB-UniRule"/>
</dbReference>
<dbReference type="GO" id="GO:0000049">
    <property type="term" value="F:tRNA binding"/>
    <property type="evidence" value="ECO:0007669"/>
    <property type="project" value="UniProtKB-KW"/>
</dbReference>
<dbReference type="GO" id="GO:0006435">
    <property type="term" value="P:threonyl-tRNA aminoacylation"/>
    <property type="evidence" value="ECO:0007669"/>
    <property type="project" value="UniProtKB-UniRule"/>
</dbReference>
<dbReference type="CDD" id="cd01667">
    <property type="entry name" value="TGS_ThrRS"/>
    <property type="match status" value="1"/>
</dbReference>
<dbReference type="CDD" id="cd00860">
    <property type="entry name" value="ThrRS_anticodon"/>
    <property type="match status" value="1"/>
</dbReference>
<dbReference type="CDD" id="cd00771">
    <property type="entry name" value="ThrRS_core"/>
    <property type="match status" value="1"/>
</dbReference>
<dbReference type="FunFam" id="3.10.20.30:FF:000005">
    <property type="entry name" value="Threonine--tRNA ligase"/>
    <property type="match status" value="1"/>
</dbReference>
<dbReference type="FunFam" id="3.30.54.20:FF:000002">
    <property type="entry name" value="Threonine--tRNA ligase"/>
    <property type="match status" value="1"/>
</dbReference>
<dbReference type="FunFam" id="3.30.930.10:FF:000002">
    <property type="entry name" value="Threonine--tRNA ligase"/>
    <property type="match status" value="1"/>
</dbReference>
<dbReference type="FunFam" id="3.40.50.800:FF:000001">
    <property type="entry name" value="Threonine--tRNA ligase"/>
    <property type="match status" value="1"/>
</dbReference>
<dbReference type="FunFam" id="3.30.980.10:FF:000005">
    <property type="entry name" value="Threonyl-tRNA synthetase, mitochondrial"/>
    <property type="match status" value="1"/>
</dbReference>
<dbReference type="Gene3D" id="3.10.20.30">
    <property type="match status" value="1"/>
</dbReference>
<dbReference type="Gene3D" id="3.30.54.20">
    <property type="match status" value="1"/>
</dbReference>
<dbReference type="Gene3D" id="3.40.50.800">
    <property type="entry name" value="Anticodon-binding domain"/>
    <property type="match status" value="1"/>
</dbReference>
<dbReference type="Gene3D" id="3.30.930.10">
    <property type="entry name" value="Bira Bifunctional Protein, Domain 2"/>
    <property type="match status" value="1"/>
</dbReference>
<dbReference type="Gene3D" id="3.30.980.10">
    <property type="entry name" value="Threonyl-trna Synthetase, Chain A, domain 2"/>
    <property type="match status" value="1"/>
</dbReference>
<dbReference type="HAMAP" id="MF_00184">
    <property type="entry name" value="Thr_tRNA_synth"/>
    <property type="match status" value="1"/>
</dbReference>
<dbReference type="InterPro" id="IPR002314">
    <property type="entry name" value="aa-tRNA-synt_IIb"/>
</dbReference>
<dbReference type="InterPro" id="IPR006195">
    <property type="entry name" value="aa-tRNA-synth_II"/>
</dbReference>
<dbReference type="InterPro" id="IPR045864">
    <property type="entry name" value="aa-tRNA-synth_II/BPL/LPL"/>
</dbReference>
<dbReference type="InterPro" id="IPR004154">
    <property type="entry name" value="Anticodon-bd"/>
</dbReference>
<dbReference type="InterPro" id="IPR036621">
    <property type="entry name" value="Anticodon-bd_dom_sf"/>
</dbReference>
<dbReference type="InterPro" id="IPR012675">
    <property type="entry name" value="Beta-grasp_dom_sf"/>
</dbReference>
<dbReference type="InterPro" id="IPR004095">
    <property type="entry name" value="TGS"/>
</dbReference>
<dbReference type="InterPro" id="IPR012676">
    <property type="entry name" value="TGS-like"/>
</dbReference>
<dbReference type="InterPro" id="IPR002320">
    <property type="entry name" value="Thr-tRNA-ligase_IIa"/>
</dbReference>
<dbReference type="InterPro" id="IPR018163">
    <property type="entry name" value="Thr/Ala-tRNA-synth_IIc_edit"/>
</dbReference>
<dbReference type="InterPro" id="IPR047246">
    <property type="entry name" value="ThrRS_anticodon"/>
</dbReference>
<dbReference type="InterPro" id="IPR033728">
    <property type="entry name" value="ThrRS_core"/>
</dbReference>
<dbReference type="InterPro" id="IPR012947">
    <property type="entry name" value="tRNA_SAD"/>
</dbReference>
<dbReference type="NCBIfam" id="TIGR00418">
    <property type="entry name" value="thrS"/>
    <property type="match status" value="1"/>
</dbReference>
<dbReference type="PANTHER" id="PTHR11451:SF44">
    <property type="entry name" value="THREONINE--TRNA LIGASE, CHLOROPLASTIC_MITOCHONDRIAL 2"/>
    <property type="match status" value="1"/>
</dbReference>
<dbReference type="PANTHER" id="PTHR11451">
    <property type="entry name" value="THREONINE-TRNA LIGASE"/>
    <property type="match status" value="1"/>
</dbReference>
<dbReference type="Pfam" id="PF03129">
    <property type="entry name" value="HGTP_anticodon"/>
    <property type="match status" value="1"/>
</dbReference>
<dbReference type="Pfam" id="PF02824">
    <property type="entry name" value="TGS"/>
    <property type="match status" value="1"/>
</dbReference>
<dbReference type="Pfam" id="PF00587">
    <property type="entry name" value="tRNA-synt_2b"/>
    <property type="match status" value="1"/>
</dbReference>
<dbReference type="Pfam" id="PF07973">
    <property type="entry name" value="tRNA_SAD"/>
    <property type="match status" value="1"/>
</dbReference>
<dbReference type="PRINTS" id="PR01047">
    <property type="entry name" value="TRNASYNTHTHR"/>
</dbReference>
<dbReference type="SMART" id="SM00863">
    <property type="entry name" value="tRNA_SAD"/>
    <property type="match status" value="1"/>
</dbReference>
<dbReference type="SUPFAM" id="SSF52954">
    <property type="entry name" value="Class II aaRS ABD-related"/>
    <property type="match status" value="1"/>
</dbReference>
<dbReference type="SUPFAM" id="SSF55681">
    <property type="entry name" value="Class II aaRS and biotin synthetases"/>
    <property type="match status" value="1"/>
</dbReference>
<dbReference type="SUPFAM" id="SSF81271">
    <property type="entry name" value="TGS-like"/>
    <property type="match status" value="1"/>
</dbReference>
<dbReference type="SUPFAM" id="SSF55186">
    <property type="entry name" value="ThrRS/AlaRS common domain"/>
    <property type="match status" value="1"/>
</dbReference>
<dbReference type="PROSITE" id="PS50862">
    <property type="entry name" value="AA_TRNA_LIGASE_II"/>
    <property type="match status" value="1"/>
</dbReference>
<dbReference type="PROSITE" id="PS51880">
    <property type="entry name" value="TGS"/>
    <property type="match status" value="1"/>
</dbReference>
<keyword id="KW-0030">Aminoacyl-tRNA synthetase</keyword>
<keyword id="KW-0067">ATP-binding</keyword>
<keyword id="KW-0963">Cytoplasm</keyword>
<keyword id="KW-0436">Ligase</keyword>
<keyword id="KW-0479">Metal-binding</keyword>
<keyword id="KW-0547">Nucleotide-binding</keyword>
<keyword id="KW-0648">Protein biosynthesis</keyword>
<keyword id="KW-1185">Reference proteome</keyword>
<keyword id="KW-0694">RNA-binding</keyword>
<keyword id="KW-0820">tRNA-binding</keyword>
<keyword id="KW-0862">Zinc</keyword>
<evidence type="ECO:0000255" key="1">
    <source>
        <dbReference type="HAMAP-Rule" id="MF_00184"/>
    </source>
</evidence>
<evidence type="ECO:0000255" key="2">
    <source>
        <dbReference type="PROSITE-ProRule" id="PRU01228"/>
    </source>
</evidence>
<accession>B2JJJ7</accession>